<sequence>MSQEWKEYAKRVLDEWEPKTKLGMMVKEGQITDIHEIFRRGYQIKEPEIIDVLLPEVNARENQEVLDIALTVRMTDSGRRVRFRVLAAVGNRDGYVGLGIGHGKEVGIAIRKAINYAKLNIIEIKRGCGSWECRCRRPHSVPFAVEGKEGSVRVRLIPGPRGLGLVIGDVGKKILRLAGVQDVWSQTFGETRTTVNFAKAVFNALYNTNRVAISPEMIERYGIVVGRAMPTTFTLE</sequence>
<evidence type="ECO:0000255" key="1">
    <source>
        <dbReference type="HAMAP-Rule" id="MF_01307"/>
    </source>
</evidence>
<evidence type="ECO:0000269" key="2">
    <source>
    </source>
</evidence>
<evidence type="ECO:0000305" key="3"/>
<evidence type="ECO:0007744" key="4">
    <source>
        <dbReference type="PDB" id="4V6U"/>
    </source>
</evidence>
<name>RS5_PYRFU</name>
<proteinExistence type="evidence at protein level"/>
<dbReference type="EMBL" id="AB040118">
    <property type="protein sequence ID" value="BAB13704.1"/>
    <property type="molecule type" value="Genomic_DNA"/>
</dbReference>
<dbReference type="EMBL" id="AE009950">
    <property type="protein sequence ID" value="AAL81928.1"/>
    <property type="molecule type" value="Genomic_DNA"/>
</dbReference>
<dbReference type="PDB" id="4V6U">
    <property type="method" value="EM"/>
    <property type="resolution" value="6.60 A"/>
    <property type="chains" value="AF=1-236"/>
</dbReference>
<dbReference type="PDB" id="5JB3">
    <property type="method" value="EM"/>
    <property type="resolution" value="5.34 A"/>
    <property type="chains" value="F=1-236"/>
</dbReference>
<dbReference type="PDB" id="5JBH">
    <property type="method" value="EM"/>
    <property type="resolution" value="5.34 A"/>
    <property type="chains" value="F=1-236"/>
</dbReference>
<dbReference type="PDBsum" id="4V6U"/>
<dbReference type="PDBsum" id="5JB3"/>
<dbReference type="PDBsum" id="5JBH"/>
<dbReference type="EMDB" id="EMD-50611"/>
<dbReference type="EMDB" id="EMD-50612"/>
<dbReference type="EMDB" id="EMD-50613"/>
<dbReference type="EMDB" id="EMD-8149"/>
<dbReference type="SMR" id="Q8U017"/>
<dbReference type="STRING" id="186497.PF1804"/>
<dbReference type="PaxDb" id="186497-PF1804"/>
<dbReference type="KEGG" id="pfu:PF1804"/>
<dbReference type="PATRIC" id="fig|186497.12.peg.1875"/>
<dbReference type="eggNOG" id="arCOG04087">
    <property type="taxonomic scope" value="Archaea"/>
</dbReference>
<dbReference type="HOGENOM" id="CLU_065898_0_1_2"/>
<dbReference type="OrthoDB" id="38155at2157"/>
<dbReference type="PhylomeDB" id="Q8U017"/>
<dbReference type="Proteomes" id="UP000001013">
    <property type="component" value="Chromosome"/>
</dbReference>
<dbReference type="GO" id="GO:0022627">
    <property type="term" value="C:cytosolic small ribosomal subunit"/>
    <property type="evidence" value="ECO:0007669"/>
    <property type="project" value="TreeGrafter"/>
</dbReference>
<dbReference type="GO" id="GO:0019843">
    <property type="term" value="F:rRNA binding"/>
    <property type="evidence" value="ECO:0007669"/>
    <property type="project" value="UniProtKB-UniRule"/>
</dbReference>
<dbReference type="GO" id="GO:0003735">
    <property type="term" value="F:structural constituent of ribosome"/>
    <property type="evidence" value="ECO:0007669"/>
    <property type="project" value="InterPro"/>
</dbReference>
<dbReference type="GO" id="GO:0006412">
    <property type="term" value="P:translation"/>
    <property type="evidence" value="ECO:0007669"/>
    <property type="project" value="UniProtKB-UniRule"/>
</dbReference>
<dbReference type="FunFam" id="3.30.160.20:FF:000002">
    <property type="entry name" value="40S ribosomal protein S2"/>
    <property type="match status" value="1"/>
</dbReference>
<dbReference type="FunFam" id="3.30.230.10:FF:000004">
    <property type="entry name" value="40S ribosomal protein S2"/>
    <property type="match status" value="1"/>
</dbReference>
<dbReference type="Gene3D" id="3.30.160.20">
    <property type="match status" value="1"/>
</dbReference>
<dbReference type="Gene3D" id="3.30.230.10">
    <property type="match status" value="1"/>
</dbReference>
<dbReference type="HAMAP" id="MF_01307_A">
    <property type="entry name" value="Ribosomal_uS5_A"/>
    <property type="match status" value="1"/>
</dbReference>
<dbReference type="InterPro" id="IPR020568">
    <property type="entry name" value="Ribosomal_Su5_D2-typ_SF"/>
</dbReference>
<dbReference type="InterPro" id="IPR000851">
    <property type="entry name" value="Ribosomal_uS5"/>
</dbReference>
<dbReference type="InterPro" id="IPR047866">
    <property type="entry name" value="Ribosomal_uS5_arc"/>
</dbReference>
<dbReference type="InterPro" id="IPR005324">
    <property type="entry name" value="Ribosomal_uS5_C"/>
</dbReference>
<dbReference type="InterPro" id="IPR005711">
    <property type="entry name" value="Ribosomal_uS5_euk/arc"/>
</dbReference>
<dbReference type="InterPro" id="IPR013810">
    <property type="entry name" value="Ribosomal_uS5_N"/>
</dbReference>
<dbReference type="InterPro" id="IPR018192">
    <property type="entry name" value="Ribosomal_uS5_N_CS"/>
</dbReference>
<dbReference type="InterPro" id="IPR014721">
    <property type="entry name" value="Ribsml_uS5_D2-typ_fold_subgr"/>
</dbReference>
<dbReference type="NCBIfam" id="NF003125">
    <property type="entry name" value="PRK04044.1"/>
    <property type="match status" value="1"/>
</dbReference>
<dbReference type="NCBIfam" id="TIGR01020">
    <property type="entry name" value="uS5_euk_arch"/>
    <property type="match status" value="1"/>
</dbReference>
<dbReference type="PANTHER" id="PTHR13718:SF4">
    <property type="entry name" value="40S RIBOSOMAL PROTEIN S2"/>
    <property type="match status" value="1"/>
</dbReference>
<dbReference type="PANTHER" id="PTHR13718">
    <property type="entry name" value="RIBOSOMAL S SUBUNIT"/>
    <property type="match status" value="1"/>
</dbReference>
<dbReference type="Pfam" id="PF00333">
    <property type="entry name" value="Ribosomal_S5"/>
    <property type="match status" value="1"/>
</dbReference>
<dbReference type="Pfam" id="PF03719">
    <property type="entry name" value="Ribosomal_S5_C"/>
    <property type="match status" value="1"/>
</dbReference>
<dbReference type="SUPFAM" id="SSF54768">
    <property type="entry name" value="dsRNA-binding domain-like"/>
    <property type="match status" value="1"/>
</dbReference>
<dbReference type="SUPFAM" id="SSF54211">
    <property type="entry name" value="Ribosomal protein S5 domain 2-like"/>
    <property type="match status" value="1"/>
</dbReference>
<dbReference type="PROSITE" id="PS00585">
    <property type="entry name" value="RIBOSOMAL_S5"/>
    <property type="match status" value="1"/>
</dbReference>
<dbReference type="PROSITE" id="PS50881">
    <property type="entry name" value="S5_DSRBD"/>
    <property type="match status" value="1"/>
</dbReference>
<accession>Q8U017</accession>
<accession>Q9HH79</accession>
<keyword id="KW-0002">3D-structure</keyword>
<keyword id="KW-1185">Reference proteome</keyword>
<keyword id="KW-0687">Ribonucleoprotein</keyword>
<keyword id="KW-0689">Ribosomal protein</keyword>
<keyword id="KW-0694">RNA-binding</keyword>
<keyword id="KW-0699">rRNA-binding</keyword>
<feature type="chain" id="PRO_0000131657" description="Small ribosomal subunit protein uS5">
    <location>
        <begin position="1"/>
        <end position="236"/>
    </location>
</feature>
<feature type="domain" description="S5 DRBM" evidence="1">
    <location>
        <begin position="61"/>
        <end position="124"/>
    </location>
</feature>
<feature type="sequence conflict" description="In Ref. 1; BAB13704." evidence="3" ref="1">
    <location>
        <begin position="69"/>
        <end position="128"/>
    </location>
</feature>
<feature type="sequence conflict" description="In Ref. 1; BAB13704." evidence="3" ref="1">
    <original>Y</original>
    <variation>S</variation>
    <location>
        <position position="221"/>
    </location>
</feature>
<organism>
    <name type="scientific">Pyrococcus furiosus (strain ATCC 43587 / DSM 3638 / JCM 8422 / Vc1)</name>
    <dbReference type="NCBI Taxonomy" id="186497"/>
    <lineage>
        <taxon>Archaea</taxon>
        <taxon>Methanobacteriati</taxon>
        <taxon>Methanobacteriota</taxon>
        <taxon>Thermococci</taxon>
        <taxon>Thermococcales</taxon>
        <taxon>Thermococcaceae</taxon>
        <taxon>Pyrococcus</taxon>
    </lineage>
</organism>
<reference key="1">
    <citation type="journal article" date="2000" name="FEBS Lett.">
        <title>5S rRNA binding proteins from the hyperthermophilic archaeon, Pyrococcus furiosus.</title>
        <authorList>
            <person name="Furumoto H."/>
            <person name="Taguchi A."/>
            <person name="Itoh T."/>
            <person name="Morinaga T."/>
            <person name="Itoh T."/>
        </authorList>
    </citation>
    <scope>NUCLEOTIDE SEQUENCE [GENOMIC DNA]</scope>
    <source>
        <strain>ATCC 43587 / DSM 3638 / JCM 8422 / Vc1</strain>
    </source>
</reference>
<reference key="2">
    <citation type="journal article" date="1999" name="Genetics">
        <title>Divergence of the hyperthermophilic archaea Pyrococcus furiosus and P. horikoshii inferred from complete genomic sequences.</title>
        <authorList>
            <person name="Maeder D.L."/>
            <person name="Weiss R.B."/>
            <person name="Dunn D.M."/>
            <person name="Cherry J.L."/>
            <person name="Gonzalez J.M."/>
            <person name="DiRuggiero J."/>
            <person name="Robb F.T."/>
        </authorList>
    </citation>
    <scope>NUCLEOTIDE SEQUENCE [LARGE SCALE GENOMIC DNA]</scope>
    <source>
        <strain>ATCC 43587 / DSM 3638 / JCM 8422 / Vc1</strain>
    </source>
</reference>
<reference evidence="4" key="3">
    <citation type="journal article" date="2013" name="Nucleic Acids Res.">
        <title>Promiscuous behaviour of archaeal ribosomal proteins: implications for eukaryotic ribosome evolution.</title>
        <authorList>
            <person name="Armache J.P."/>
            <person name="Anger A.M."/>
            <person name="Marquez V."/>
            <person name="Franckenberg S."/>
            <person name="Frohlich T."/>
            <person name="Villa E."/>
            <person name="Berninghausen O."/>
            <person name="Thomm M."/>
            <person name="Arnold G.J."/>
            <person name="Beckmann R."/>
            <person name="Wilson D.N."/>
        </authorList>
    </citation>
    <scope>STRUCTURE BY ELECTRON MICROSCOPY (6.60 ANGSTROMS) IN THE 70S RIBOSOME</scope>
    <scope>SUBUNIT</scope>
</reference>
<protein>
    <recommendedName>
        <fullName evidence="1">Small ribosomal subunit protein uS5</fullName>
    </recommendedName>
    <alternativeName>
        <fullName>30S ribosomal protein S5</fullName>
    </alternativeName>
    <alternativeName>
        <fullName>PfS5</fullName>
    </alternativeName>
</protein>
<comment type="function">
    <text evidence="1">With S4 and S12 plays an important role in translational accuracy.</text>
</comment>
<comment type="subunit">
    <text evidence="1 2">Part of the 30S ribosomal subunit (PubMed:23222135). Contacts protein S4 (By similarity).</text>
</comment>
<comment type="domain">
    <text>The N-terminal domain interacts with the head of the 30S subunit; the C-terminal domain interacts with the body and contacts protein S4. The interaction surface between S4 and S5 is involved in control of translational fidelity.</text>
</comment>
<comment type="similarity">
    <text evidence="1">Belongs to the universal ribosomal protein uS5 family.</text>
</comment>
<gene>
    <name evidence="1" type="primary">rps5</name>
    <name type="ordered locus">PF1804</name>
</gene>